<evidence type="ECO:0000250" key="1"/>
<evidence type="ECO:0000305" key="2"/>
<protein>
    <recommendedName>
        <fullName>Probable tRNA sulfurtransferase</fullName>
        <ecNumber>2.8.1.4</ecNumber>
    </recommendedName>
    <alternativeName>
        <fullName>Sulfur carrier protein ThiS sulfurtransferase</fullName>
    </alternativeName>
    <alternativeName>
        <fullName>Thiamine biosynthesis protein ThiI</fullName>
    </alternativeName>
    <alternativeName>
        <fullName>tRNA 4-thiouridine synthase</fullName>
    </alternativeName>
</protein>
<gene>
    <name type="primary">thiI</name>
    <name type="ordered locus">STK_22250</name>
</gene>
<comment type="function">
    <text evidence="1">Catalyzes the ATP-dependent transfer of a sulfur to tRNA to produce 4-thiouridine in position 8 of tRNAs, which functions as a near-UV photosensor. Also catalyzes the transfer of sulfur to the sulfur carrier protein ThiS, forming ThiS-thiocarboxylate. This is a step in the synthesis of thiazole, in the thiamine biosynthesis pathway. The sulfur is donated as persulfide by IscS (By similarity).</text>
</comment>
<comment type="catalytic activity">
    <reaction>
        <text>[ThiI sulfur-carrier protein]-S-sulfanyl-L-cysteine + a uridine in tRNA + 2 reduced [2Fe-2S]-[ferredoxin] + ATP + H(+) = [ThiI sulfur-carrier protein]-L-cysteine + a 4-thiouridine in tRNA + 2 oxidized [2Fe-2S]-[ferredoxin] + AMP + diphosphate</text>
        <dbReference type="Rhea" id="RHEA:24176"/>
        <dbReference type="Rhea" id="RHEA-COMP:10000"/>
        <dbReference type="Rhea" id="RHEA-COMP:10001"/>
        <dbReference type="Rhea" id="RHEA-COMP:13337"/>
        <dbReference type="Rhea" id="RHEA-COMP:13338"/>
        <dbReference type="Rhea" id="RHEA-COMP:13339"/>
        <dbReference type="Rhea" id="RHEA-COMP:13340"/>
        <dbReference type="ChEBI" id="CHEBI:15378"/>
        <dbReference type="ChEBI" id="CHEBI:29950"/>
        <dbReference type="ChEBI" id="CHEBI:30616"/>
        <dbReference type="ChEBI" id="CHEBI:33019"/>
        <dbReference type="ChEBI" id="CHEBI:33737"/>
        <dbReference type="ChEBI" id="CHEBI:33738"/>
        <dbReference type="ChEBI" id="CHEBI:61963"/>
        <dbReference type="ChEBI" id="CHEBI:65315"/>
        <dbReference type="ChEBI" id="CHEBI:136798"/>
        <dbReference type="ChEBI" id="CHEBI:456215"/>
        <dbReference type="EC" id="2.8.1.4"/>
    </reaction>
</comment>
<comment type="catalytic activity">
    <reaction>
        <text>[ThiS sulfur-carrier protein]-C-terminal Gly-Gly-AMP + S-sulfanyl-L-cysteinyl-[cysteine desulfurase] + AH2 = [ThiS sulfur-carrier protein]-C-terminal-Gly-aminoethanethioate + L-cysteinyl-[cysteine desulfurase] + A + AMP + 2 H(+)</text>
        <dbReference type="Rhea" id="RHEA:43340"/>
        <dbReference type="Rhea" id="RHEA-COMP:12157"/>
        <dbReference type="Rhea" id="RHEA-COMP:12158"/>
        <dbReference type="Rhea" id="RHEA-COMP:12910"/>
        <dbReference type="Rhea" id="RHEA-COMP:19908"/>
        <dbReference type="ChEBI" id="CHEBI:13193"/>
        <dbReference type="ChEBI" id="CHEBI:15378"/>
        <dbReference type="ChEBI" id="CHEBI:17499"/>
        <dbReference type="ChEBI" id="CHEBI:29950"/>
        <dbReference type="ChEBI" id="CHEBI:61963"/>
        <dbReference type="ChEBI" id="CHEBI:90618"/>
        <dbReference type="ChEBI" id="CHEBI:232372"/>
        <dbReference type="ChEBI" id="CHEBI:456215"/>
    </reaction>
</comment>
<comment type="pathway">
    <text>Cofactor biosynthesis; thiamine diphosphate biosynthesis.</text>
</comment>
<comment type="subcellular location">
    <subcellularLocation>
        <location evidence="1">Cytoplasm</location>
    </subcellularLocation>
</comment>
<comment type="similarity">
    <text evidence="2">Belongs to the ThiI family.</text>
</comment>
<keyword id="KW-0067">ATP-binding</keyword>
<keyword id="KW-0963">Cytoplasm</keyword>
<keyword id="KW-0547">Nucleotide-binding</keyword>
<keyword id="KW-1185">Reference proteome</keyword>
<keyword id="KW-0694">RNA-binding</keyword>
<keyword id="KW-0784">Thiamine biosynthesis</keyword>
<keyword id="KW-0808">Transferase</keyword>
<keyword id="KW-0820">tRNA-binding</keyword>
<organism>
    <name type="scientific">Sulfurisphaera tokodaii (strain DSM 16993 / JCM 10545 / NBRC 100140 / 7)</name>
    <name type="common">Sulfolobus tokodaii</name>
    <dbReference type="NCBI Taxonomy" id="273063"/>
    <lineage>
        <taxon>Archaea</taxon>
        <taxon>Thermoproteota</taxon>
        <taxon>Thermoprotei</taxon>
        <taxon>Sulfolobales</taxon>
        <taxon>Sulfolobaceae</taxon>
        <taxon>Sulfurisphaera</taxon>
    </lineage>
</organism>
<reference key="1">
    <citation type="journal article" date="2001" name="DNA Res.">
        <title>Complete genome sequence of an aerobic thermoacidophilic Crenarchaeon, Sulfolobus tokodaii strain7.</title>
        <authorList>
            <person name="Kawarabayasi Y."/>
            <person name="Hino Y."/>
            <person name="Horikawa H."/>
            <person name="Jin-no K."/>
            <person name="Takahashi M."/>
            <person name="Sekine M."/>
            <person name="Baba S."/>
            <person name="Ankai A."/>
            <person name="Kosugi H."/>
            <person name="Hosoyama A."/>
            <person name="Fukui S."/>
            <person name="Nagai Y."/>
            <person name="Nishijima K."/>
            <person name="Otsuka R."/>
            <person name="Nakazawa H."/>
            <person name="Takamiya M."/>
            <person name="Kato Y."/>
            <person name="Yoshizawa T."/>
            <person name="Tanaka T."/>
            <person name="Kudoh Y."/>
            <person name="Yamazaki J."/>
            <person name="Kushida N."/>
            <person name="Oguchi A."/>
            <person name="Aoki K."/>
            <person name="Masuda S."/>
            <person name="Yanagii M."/>
            <person name="Nishimura M."/>
            <person name="Yamagishi A."/>
            <person name="Oshima T."/>
            <person name="Kikuchi H."/>
        </authorList>
    </citation>
    <scope>NUCLEOTIDE SEQUENCE [LARGE SCALE GENOMIC DNA]</scope>
    <source>
        <strain>DSM 16993 / JCM 10545 / NBRC 100140 / 7</strain>
    </source>
</reference>
<sequence length="368" mass="41293">MIIIVRLAGEIGIKSPRSRKNFEHALINNIKNVIDVEEVSIDQGYIILNTKGDFSKLSKVFGIASFSPADVISFSKLQDIVDFVKNKYAEKVKGKKFAIRVRRVGKHNFTSLDAAKVIGSSLYPYSSGVDLENPEIEIHVDIRQDYAYVYDKVYEGARGLPIGTTGRTIVLFSGGFDSPIATWMMMKRGSSVTLLNFKLGGEVHKKIVLDEVKILSEWNSGHKIKVYFVNGIKVLSALAGVKRYIRVVVLKRIMYKTAELLAKKINAYSVTTGESLSQVSSQTMKNLFVTEYDINIPIFRPLIGFDKEEIIELSRKVGTYEYSSKLPEYCAISSKSTTSANLEEVLESEKQVNIEYEKLIDEAEVVEV</sequence>
<proteinExistence type="inferred from homology"/>
<feature type="chain" id="PRO_0000154901" description="Probable tRNA sulfurtransferase">
    <location>
        <begin position="1"/>
        <end position="368"/>
    </location>
</feature>
<feature type="domain" description="THUMP">
    <location>
        <begin position="51"/>
        <end position="153"/>
    </location>
</feature>
<feature type="binding site" evidence="1">
    <location>
        <begin position="171"/>
        <end position="172"/>
    </location>
    <ligand>
        <name>ATP</name>
        <dbReference type="ChEBI" id="CHEBI:30616"/>
    </ligand>
</feature>
<feature type="binding site" evidence="1">
    <location>
        <begin position="196"/>
        <end position="197"/>
    </location>
    <ligand>
        <name>ATP</name>
        <dbReference type="ChEBI" id="CHEBI:30616"/>
    </ligand>
</feature>
<feature type="binding site" evidence="1">
    <location>
        <position position="251"/>
    </location>
    <ligand>
        <name>ATP</name>
        <dbReference type="ChEBI" id="CHEBI:30616"/>
    </ligand>
</feature>
<feature type="binding site" evidence="1">
    <location>
        <position position="273"/>
    </location>
    <ligand>
        <name>ATP</name>
        <dbReference type="ChEBI" id="CHEBI:30616"/>
    </ligand>
</feature>
<feature type="binding site" evidence="1">
    <location>
        <position position="282"/>
    </location>
    <ligand>
        <name>ATP</name>
        <dbReference type="ChEBI" id="CHEBI:30616"/>
    </ligand>
</feature>
<accession>Q96YE5</accession>
<name>THII_SULTO</name>
<dbReference type="EC" id="2.8.1.4"/>
<dbReference type="EMBL" id="BA000023">
    <property type="protein sequence ID" value="BAB67332.1"/>
    <property type="molecule type" value="Genomic_DNA"/>
</dbReference>
<dbReference type="RefSeq" id="WP_010980307.1">
    <property type="nucleotide sequence ID" value="NC_003106.2"/>
</dbReference>
<dbReference type="SMR" id="Q96YE5"/>
<dbReference type="STRING" id="273063.STK_22250"/>
<dbReference type="GeneID" id="1460303"/>
<dbReference type="KEGG" id="sto:STK_22250"/>
<dbReference type="PATRIC" id="fig|273063.9.peg.2523"/>
<dbReference type="eggNOG" id="arCOG00038">
    <property type="taxonomic scope" value="Archaea"/>
</dbReference>
<dbReference type="OrthoDB" id="372227at2157"/>
<dbReference type="UniPathway" id="UPA00060"/>
<dbReference type="Proteomes" id="UP000001015">
    <property type="component" value="Chromosome"/>
</dbReference>
<dbReference type="GO" id="GO:0005829">
    <property type="term" value="C:cytosol"/>
    <property type="evidence" value="ECO:0007669"/>
    <property type="project" value="TreeGrafter"/>
</dbReference>
<dbReference type="GO" id="GO:0005524">
    <property type="term" value="F:ATP binding"/>
    <property type="evidence" value="ECO:0007669"/>
    <property type="project" value="UniProtKB-UniRule"/>
</dbReference>
<dbReference type="GO" id="GO:0004810">
    <property type="term" value="F:CCA tRNA nucleotidyltransferase activity"/>
    <property type="evidence" value="ECO:0007669"/>
    <property type="project" value="InterPro"/>
</dbReference>
<dbReference type="GO" id="GO:0000049">
    <property type="term" value="F:tRNA binding"/>
    <property type="evidence" value="ECO:0007669"/>
    <property type="project" value="UniProtKB-UniRule"/>
</dbReference>
<dbReference type="GO" id="GO:0140741">
    <property type="term" value="F:tRNA-uracil-4 sulfurtransferase activity"/>
    <property type="evidence" value="ECO:0007669"/>
    <property type="project" value="UniProtKB-EC"/>
</dbReference>
<dbReference type="GO" id="GO:0009228">
    <property type="term" value="P:thiamine biosynthetic process"/>
    <property type="evidence" value="ECO:0007669"/>
    <property type="project" value="UniProtKB-KW"/>
</dbReference>
<dbReference type="GO" id="GO:0009229">
    <property type="term" value="P:thiamine diphosphate biosynthetic process"/>
    <property type="evidence" value="ECO:0007669"/>
    <property type="project" value="UniProtKB-UniRule"/>
</dbReference>
<dbReference type="GO" id="GO:0052837">
    <property type="term" value="P:thiazole biosynthetic process"/>
    <property type="evidence" value="ECO:0007669"/>
    <property type="project" value="TreeGrafter"/>
</dbReference>
<dbReference type="GO" id="GO:0002937">
    <property type="term" value="P:tRNA 4-thiouridine biosynthesis"/>
    <property type="evidence" value="ECO:0007669"/>
    <property type="project" value="TreeGrafter"/>
</dbReference>
<dbReference type="CDD" id="cd11716">
    <property type="entry name" value="THUMP_ThiI"/>
    <property type="match status" value="1"/>
</dbReference>
<dbReference type="Gene3D" id="3.30.2130.30">
    <property type="match status" value="1"/>
</dbReference>
<dbReference type="Gene3D" id="3.40.50.620">
    <property type="entry name" value="HUPs"/>
    <property type="match status" value="1"/>
</dbReference>
<dbReference type="HAMAP" id="MF_00021">
    <property type="entry name" value="ThiI"/>
    <property type="match status" value="1"/>
</dbReference>
<dbReference type="InterPro" id="IPR014729">
    <property type="entry name" value="Rossmann-like_a/b/a_fold"/>
</dbReference>
<dbReference type="InterPro" id="IPR020536">
    <property type="entry name" value="ThiI_AANH"/>
</dbReference>
<dbReference type="InterPro" id="IPR054173">
    <property type="entry name" value="ThiI_fer"/>
</dbReference>
<dbReference type="InterPro" id="IPR049961">
    <property type="entry name" value="ThiI_N"/>
</dbReference>
<dbReference type="InterPro" id="IPR004114">
    <property type="entry name" value="THUMP_dom"/>
</dbReference>
<dbReference type="InterPro" id="IPR049962">
    <property type="entry name" value="THUMP_ThiI"/>
</dbReference>
<dbReference type="InterPro" id="IPR003720">
    <property type="entry name" value="tRNA_STrfase"/>
</dbReference>
<dbReference type="InterPro" id="IPR050102">
    <property type="entry name" value="tRNA_sulfurtransferase_ThiI"/>
</dbReference>
<dbReference type="NCBIfam" id="TIGR00342">
    <property type="entry name" value="tRNA uracil 4-sulfurtransferase ThiI"/>
    <property type="match status" value="1"/>
</dbReference>
<dbReference type="PANTHER" id="PTHR43209">
    <property type="entry name" value="TRNA SULFURTRANSFERASE"/>
    <property type="match status" value="1"/>
</dbReference>
<dbReference type="PANTHER" id="PTHR43209:SF1">
    <property type="entry name" value="TRNA SULFURTRANSFERASE"/>
    <property type="match status" value="1"/>
</dbReference>
<dbReference type="Pfam" id="PF02568">
    <property type="entry name" value="ThiI"/>
    <property type="match status" value="1"/>
</dbReference>
<dbReference type="Pfam" id="PF22025">
    <property type="entry name" value="ThiI_fer"/>
    <property type="match status" value="1"/>
</dbReference>
<dbReference type="Pfam" id="PF02926">
    <property type="entry name" value="THUMP"/>
    <property type="match status" value="1"/>
</dbReference>
<dbReference type="SMART" id="SM00981">
    <property type="entry name" value="THUMP"/>
    <property type="match status" value="1"/>
</dbReference>
<dbReference type="SUPFAM" id="SSF52402">
    <property type="entry name" value="Adenine nucleotide alpha hydrolases-like"/>
    <property type="match status" value="1"/>
</dbReference>
<dbReference type="SUPFAM" id="SSF143437">
    <property type="entry name" value="THUMP domain-like"/>
    <property type="match status" value="1"/>
</dbReference>
<dbReference type="PROSITE" id="PS51165">
    <property type="entry name" value="THUMP"/>
    <property type="match status" value="1"/>
</dbReference>